<dbReference type="EMBL" id="AF222789">
    <property type="protein sequence ID" value="AAF33693.1"/>
    <property type="molecule type" value="Genomic_DNA"/>
</dbReference>
<dbReference type="EMBL" id="AE016958">
    <property type="protein sequence ID" value="AAS02320.1"/>
    <property type="molecule type" value="Genomic_DNA"/>
</dbReference>
<dbReference type="RefSeq" id="WP_003876778.1">
    <property type="nucleotide sequence ID" value="NZ_CP106873.1"/>
</dbReference>
<dbReference type="SMR" id="Q9L7L5"/>
<dbReference type="STRING" id="262316.MAP_0003"/>
<dbReference type="KEGG" id="mpa:MAP_0003"/>
<dbReference type="PATRIC" id="fig|262316.17.peg.4"/>
<dbReference type="eggNOG" id="COG1195">
    <property type="taxonomic scope" value="Bacteria"/>
</dbReference>
<dbReference type="HOGENOM" id="CLU_040267_1_1_11"/>
<dbReference type="Proteomes" id="UP000000580">
    <property type="component" value="Chromosome"/>
</dbReference>
<dbReference type="GO" id="GO:0005737">
    <property type="term" value="C:cytoplasm"/>
    <property type="evidence" value="ECO:0007669"/>
    <property type="project" value="UniProtKB-SubCell"/>
</dbReference>
<dbReference type="GO" id="GO:0005524">
    <property type="term" value="F:ATP binding"/>
    <property type="evidence" value="ECO:0007669"/>
    <property type="project" value="UniProtKB-UniRule"/>
</dbReference>
<dbReference type="GO" id="GO:0003697">
    <property type="term" value="F:single-stranded DNA binding"/>
    <property type="evidence" value="ECO:0007669"/>
    <property type="project" value="UniProtKB-UniRule"/>
</dbReference>
<dbReference type="GO" id="GO:0006260">
    <property type="term" value="P:DNA replication"/>
    <property type="evidence" value="ECO:0007669"/>
    <property type="project" value="UniProtKB-UniRule"/>
</dbReference>
<dbReference type="GO" id="GO:0000731">
    <property type="term" value="P:DNA synthesis involved in DNA repair"/>
    <property type="evidence" value="ECO:0007669"/>
    <property type="project" value="TreeGrafter"/>
</dbReference>
<dbReference type="GO" id="GO:0006302">
    <property type="term" value="P:double-strand break repair"/>
    <property type="evidence" value="ECO:0007669"/>
    <property type="project" value="TreeGrafter"/>
</dbReference>
<dbReference type="GO" id="GO:0009432">
    <property type="term" value="P:SOS response"/>
    <property type="evidence" value="ECO:0007669"/>
    <property type="project" value="UniProtKB-UniRule"/>
</dbReference>
<dbReference type="CDD" id="cd03242">
    <property type="entry name" value="ABC_RecF"/>
    <property type="match status" value="1"/>
</dbReference>
<dbReference type="Gene3D" id="3.40.50.300">
    <property type="entry name" value="P-loop containing nucleotide triphosphate hydrolases"/>
    <property type="match status" value="1"/>
</dbReference>
<dbReference type="Gene3D" id="1.20.1050.90">
    <property type="entry name" value="RecF/RecN/SMC, N-terminal domain"/>
    <property type="match status" value="1"/>
</dbReference>
<dbReference type="HAMAP" id="MF_00365">
    <property type="entry name" value="RecF"/>
    <property type="match status" value="1"/>
</dbReference>
<dbReference type="InterPro" id="IPR001238">
    <property type="entry name" value="DNA-binding_RecF"/>
</dbReference>
<dbReference type="InterPro" id="IPR018078">
    <property type="entry name" value="DNA-binding_RecF_CS"/>
</dbReference>
<dbReference type="InterPro" id="IPR027417">
    <property type="entry name" value="P-loop_NTPase"/>
</dbReference>
<dbReference type="InterPro" id="IPR003395">
    <property type="entry name" value="RecF/RecN/SMC_N"/>
</dbReference>
<dbReference type="InterPro" id="IPR042174">
    <property type="entry name" value="RecF_2"/>
</dbReference>
<dbReference type="NCBIfam" id="TIGR00611">
    <property type="entry name" value="recf"/>
    <property type="match status" value="1"/>
</dbReference>
<dbReference type="PANTHER" id="PTHR32182">
    <property type="entry name" value="DNA REPLICATION AND REPAIR PROTEIN RECF"/>
    <property type="match status" value="1"/>
</dbReference>
<dbReference type="PANTHER" id="PTHR32182:SF0">
    <property type="entry name" value="DNA REPLICATION AND REPAIR PROTEIN RECF"/>
    <property type="match status" value="1"/>
</dbReference>
<dbReference type="Pfam" id="PF02463">
    <property type="entry name" value="SMC_N"/>
    <property type="match status" value="1"/>
</dbReference>
<dbReference type="SUPFAM" id="SSF52540">
    <property type="entry name" value="P-loop containing nucleoside triphosphate hydrolases"/>
    <property type="match status" value="1"/>
</dbReference>
<dbReference type="PROSITE" id="PS00617">
    <property type="entry name" value="RECF_1"/>
    <property type="match status" value="1"/>
</dbReference>
<dbReference type="PROSITE" id="PS00618">
    <property type="entry name" value="RECF_2"/>
    <property type="match status" value="1"/>
</dbReference>
<keyword id="KW-0067">ATP-binding</keyword>
<keyword id="KW-0963">Cytoplasm</keyword>
<keyword id="KW-0227">DNA damage</keyword>
<keyword id="KW-0234">DNA repair</keyword>
<keyword id="KW-0235">DNA replication</keyword>
<keyword id="KW-0238">DNA-binding</keyword>
<keyword id="KW-0547">Nucleotide-binding</keyword>
<keyword id="KW-1185">Reference proteome</keyword>
<keyword id="KW-0742">SOS response</keyword>
<sequence>MYVRHLGLRDFRSWAHADLELQPGRTVFIGSNGFGKTNLLEALWYSSTLGSHRVGTDAPLIRAGADRAVVSTIVVNDGRECAVDLEIAAGRANKARLNRSPVRSTREVLGVLRAVLFAPEDLALVRGDPSERRRYLDDLATLRRPAIAAVRADYDKVLRQRTALLKSLSGARHRGDRGALDTLDVWDSRLAEYGAQLMAARIDLVNQLAPEVEKAYQLLAPGSRAASIGYRSSLGAAASAEVNAGDRDYLEAALLAGLAAHRDAELERGMCLVGPHRDDLELWLGEQVAKGFASHGESWSLALSLRLAAFELLRADESDPVLLLDDVFAELDAARRRALAAVAESAEQVLVTAAVLEDIPTGWQARRLFVELRDTDAGRVSELRP</sequence>
<protein>
    <recommendedName>
        <fullName>DNA replication and repair protein RecF</fullName>
    </recommendedName>
</protein>
<feature type="chain" id="PRO_0000196433" description="DNA replication and repair protein RecF">
    <location>
        <begin position="1"/>
        <end position="385"/>
    </location>
</feature>
<feature type="binding site" evidence="2">
    <location>
        <begin position="30"/>
        <end position="37"/>
    </location>
    <ligand>
        <name>ATP</name>
        <dbReference type="ChEBI" id="CHEBI:30616"/>
    </ligand>
</feature>
<feature type="sequence conflict" description="In Ref. 1; AAF33693." evidence="3" ref="1">
    <original>G</original>
    <variation>S</variation>
    <location>
        <position position="175"/>
    </location>
</feature>
<feature type="sequence conflict" description="In Ref. 1; AAF33693." evidence="3" ref="1">
    <original>F</original>
    <variation>Y</variation>
    <location>
        <position position="310"/>
    </location>
</feature>
<proteinExistence type="inferred from homology"/>
<organism>
    <name type="scientific">Mycolicibacterium paratuberculosis (strain ATCC BAA-968 / K-10)</name>
    <name type="common">Mycobacterium paratuberculosis</name>
    <dbReference type="NCBI Taxonomy" id="262316"/>
    <lineage>
        <taxon>Bacteria</taxon>
        <taxon>Bacillati</taxon>
        <taxon>Actinomycetota</taxon>
        <taxon>Actinomycetes</taxon>
        <taxon>Mycobacteriales</taxon>
        <taxon>Mycobacteriaceae</taxon>
        <taxon>Mycobacterium</taxon>
        <taxon>Mycobacterium avium complex (MAC)</taxon>
    </lineage>
</organism>
<reference key="1">
    <citation type="journal article" date="2003" name="BMC Microbiol.">
        <title>Genomic homogeneity between Mycobacterium avium subsp. avium and Mycobacterium avium subsp. paratuberculosis belies their divergent growth rates.</title>
        <authorList>
            <person name="Bannantine J.P."/>
            <person name="Zhang Q."/>
            <person name="Li L.L."/>
            <person name="Kapur V."/>
        </authorList>
    </citation>
    <scope>NUCLEOTIDE SEQUENCE [GENOMIC DNA]</scope>
    <source>
        <strain>ATCC BAA-968 / K-10</strain>
    </source>
</reference>
<reference key="2">
    <citation type="journal article" date="2005" name="Proc. Natl. Acad. Sci. U.S.A.">
        <title>The complete genome sequence of Mycobacterium avium subspecies paratuberculosis.</title>
        <authorList>
            <person name="Li L."/>
            <person name="Bannantine J.P."/>
            <person name="Zhang Q."/>
            <person name="Amonsin A."/>
            <person name="May B.J."/>
            <person name="Alt D."/>
            <person name="Banerji N."/>
            <person name="Kanjilal S."/>
            <person name="Kapur V."/>
        </authorList>
    </citation>
    <scope>NUCLEOTIDE SEQUENCE [LARGE SCALE GENOMIC DNA]</scope>
    <source>
        <strain>ATCC BAA-968 / K-10</strain>
    </source>
</reference>
<accession>Q9L7L5</accession>
<name>RECF_MYCPA</name>
<gene>
    <name type="primary">recF</name>
    <name type="ordered locus">MAP_0003</name>
</gene>
<evidence type="ECO:0000250" key="1"/>
<evidence type="ECO:0000255" key="2"/>
<evidence type="ECO:0000305" key="3"/>
<comment type="function">
    <text evidence="1">The RecF protein is involved in DNA metabolism; it is required for DNA replication and normal SOS inducibility. RecF binds preferentially to single-stranded, linear DNA. It also seems to bind ATP (By similarity).</text>
</comment>
<comment type="subcellular location">
    <subcellularLocation>
        <location evidence="1">Cytoplasm</location>
    </subcellularLocation>
</comment>
<comment type="similarity">
    <text evidence="3">Belongs to the RecF family.</text>
</comment>